<accession>A5FXB8</accession>
<gene>
    <name evidence="1" type="primary">recA</name>
    <name type="ordered locus">Acry_1034</name>
</gene>
<sequence length="343" mass="36859">MEKNKALDAALAQIERAFGKGSIMRMGSRSESEAIDVISTGSLGLDLALGIGGLPRGRVIEIYGPESSGKTTLALHAVAEAQKRGGTCAFVDAEHALDPIYARKLGVDVDNLLISQPDTGEQALEIADTLVRSGAIDVLVVDSVAALVPRAELEGEMGDSHVGLHARLMSQALRKLTGSISRSKTLVIFLNQIRLKIGVMFGNPETTTGGNALKFYASIRMDIRRIGSIKDREEVTGNQTRVKVVKNKLAPPFRQVEFDIMYGEGISKVGELLDLGVKAGIVEKSGAWFSCDSQRIGQGRENAKQFLRDNPDVAASIEQRIRAQANLVEAAMITDETETEAAD</sequence>
<feature type="chain" id="PRO_1000078660" description="Protein RecA">
    <location>
        <begin position="1"/>
        <end position="343"/>
    </location>
</feature>
<feature type="binding site" evidence="1">
    <location>
        <begin position="64"/>
        <end position="71"/>
    </location>
    <ligand>
        <name>ATP</name>
        <dbReference type="ChEBI" id="CHEBI:30616"/>
    </ligand>
</feature>
<protein>
    <recommendedName>
        <fullName evidence="1">Protein RecA</fullName>
    </recommendedName>
    <alternativeName>
        <fullName evidence="1">Recombinase A</fullName>
    </alternativeName>
</protein>
<evidence type="ECO:0000255" key="1">
    <source>
        <dbReference type="HAMAP-Rule" id="MF_00268"/>
    </source>
</evidence>
<keyword id="KW-0067">ATP-binding</keyword>
<keyword id="KW-0963">Cytoplasm</keyword>
<keyword id="KW-0227">DNA damage</keyword>
<keyword id="KW-0233">DNA recombination</keyword>
<keyword id="KW-0234">DNA repair</keyword>
<keyword id="KW-0238">DNA-binding</keyword>
<keyword id="KW-0547">Nucleotide-binding</keyword>
<keyword id="KW-1185">Reference proteome</keyword>
<keyword id="KW-0742">SOS response</keyword>
<organism>
    <name type="scientific">Acidiphilium cryptum (strain JF-5)</name>
    <dbReference type="NCBI Taxonomy" id="349163"/>
    <lineage>
        <taxon>Bacteria</taxon>
        <taxon>Pseudomonadati</taxon>
        <taxon>Pseudomonadota</taxon>
        <taxon>Alphaproteobacteria</taxon>
        <taxon>Acetobacterales</taxon>
        <taxon>Acidocellaceae</taxon>
        <taxon>Acidiphilium</taxon>
    </lineage>
</organism>
<reference key="1">
    <citation type="submission" date="2007-05" db="EMBL/GenBank/DDBJ databases">
        <title>Complete sequence of chromosome of Acidiphilium cryptum JF-5.</title>
        <authorList>
            <consortium name="US DOE Joint Genome Institute"/>
            <person name="Copeland A."/>
            <person name="Lucas S."/>
            <person name="Lapidus A."/>
            <person name="Barry K."/>
            <person name="Detter J.C."/>
            <person name="Glavina del Rio T."/>
            <person name="Hammon N."/>
            <person name="Israni S."/>
            <person name="Dalin E."/>
            <person name="Tice H."/>
            <person name="Pitluck S."/>
            <person name="Sims D."/>
            <person name="Brettin T."/>
            <person name="Bruce D."/>
            <person name="Han C."/>
            <person name="Schmutz J."/>
            <person name="Larimer F."/>
            <person name="Land M."/>
            <person name="Hauser L."/>
            <person name="Kyrpides N."/>
            <person name="Kim E."/>
            <person name="Magnuson T."/>
            <person name="Richardson P."/>
        </authorList>
    </citation>
    <scope>NUCLEOTIDE SEQUENCE [LARGE SCALE GENOMIC DNA]</scope>
    <source>
        <strain>JF-5</strain>
    </source>
</reference>
<dbReference type="EMBL" id="CP000697">
    <property type="protein sequence ID" value="ABQ30250.1"/>
    <property type="molecule type" value="Genomic_DNA"/>
</dbReference>
<dbReference type="RefSeq" id="WP_007423960.1">
    <property type="nucleotide sequence ID" value="NC_009484.1"/>
</dbReference>
<dbReference type="SMR" id="A5FXB8"/>
<dbReference type="STRING" id="349163.Acry_1034"/>
<dbReference type="KEGG" id="acr:Acry_1034"/>
<dbReference type="eggNOG" id="COG0468">
    <property type="taxonomic scope" value="Bacteria"/>
</dbReference>
<dbReference type="HOGENOM" id="CLU_040469_1_2_5"/>
<dbReference type="Proteomes" id="UP000000245">
    <property type="component" value="Chromosome"/>
</dbReference>
<dbReference type="GO" id="GO:0005829">
    <property type="term" value="C:cytosol"/>
    <property type="evidence" value="ECO:0007669"/>
    <property type="project" value="TreeGrafter"/>
</dbReference>
<dbReference type="GO" id="GO:0005524">
    <property type="term" value="F:ATP binding"/>
    <property type="evidence" value="ECO:0007669"/>
    <property type="project" value="UniProtKB-UniRule"/>
</dbReference>
<dbReference type="GO" id="GO:0016887">
    <property type="term" value="F:ATP hydrolysis activity"/>
    <property type="evidence" value="ECO:0007669"/>
    <property type="project" value="InterPro"/>
</dbReference>
<dbReference type="GO" id="GO:0140664">
    <property type="term" value="F:ATP-dependent DNA damage sensor activity"/>
    <property type="evidence" value="ECO:0007669"/>
    <property type="project" value="InterPro"/>
</dbReference>
<dbReference type="GO" id="GO:0003684">
    <property type="term" value="F:damaged DNA binding"/>
    <property type="evidence" value="ECO:0007669"/>
    <property type="project" value="UniProtKB-UniRule"/>
</dbReference>
<dbReference type="GO" id="GO:0003697">
    <property type="term" value="F:single-stranded DNA binding"/>
    <property type="evidence" value="ECO:0007669"/>
    <property type="project" value="UniProtKB-UniRule"/>
</dbReference>
<dbReference type="GO" id="GO:0006310">
    <property type="term" value="P:DNA recombination"/>
    <property type="evidence" value="ECO:0007669"/>
    <property type="project" value="UniProtKB-UniRule"/>
</dbReference>
<dbReference type="GO" id="GO:0006281">
    <property type="term" value="P:DNA repair"/>
    <property type="evidence" value="ECO:0007669"/>
    <property type="project" value="UniProtKB-UniRule"/>
</dbReference>
<dbReference type="GO" id="GO:0009432">
    <property type="term" value="P:SOS response"/>
    <property type="evidence" value="ECO:0007669"/>
    <property type="project" value="UniProtKB-UniRule"/>
</dbReference>
<dbReference type="CDD" id="cd00983">
    <property type="entry name" value="RecA"/>
    <property type="match status" value="1"/>
</dbReference>
<dbReference type="FunFam" id="3.40.50.300:FF:000087">
    <property type="entry name" value="Recombinase RecA"/>
    <property type="match status" value="1"/>
</dbReference>
<dbReference type="Gene3D" id="3.40.50.300">
    <property type="entry name" value="P-loop containing nucleotide triphosphate hydrolases"/>
    <property type="match status" value="1"/>
</dbReference>
<dbReference type="HAMAP" id="MF_00268">
    <property type="entry name" value="RecA"/>
    <property type="match status" value="1"/>
</dbReference>
<dbReference type="InterPro" id="IPR003593">
    <property type="entry name" value="AAA+_ATPase"/>
</dbReference>
<dbReference type="InterPro" id="IPR013765">
    <property type="entry name" value="DNA_recomb/repair_RecA"/>
</dbReference>
<dbReference type="InterPro" id="IPR020584">
    <property type="entry name" value="DNA_recomb/repair_RecA_CS"/>
</dbReference>
<dbReference type="InterPro" id="IPR027417">
    <property type="entry name" value="P-loop_NTPase"/>
</dbReference>
<dbReference type="InterPro" id="IPR049261">
    <property type="entry name" value="RecA-like_C"/>
</dbReference>
<dbReference type="InterPro" id="IPR049428">
    <property type="entry name" value="RecA-like_N"/>
</dbReference>
<dbReference type="InterPro" id="IPR020588">
    <property type="entry name" value="RecA_ATP-bd"/>
</dbReference>
<dbReference type="InterPro" id="IPR023400">
    <property type="entry name" value="RecA_C_sf"/>
</dbReference>
<dbReference type="InterPro" id="IPR020587">
    <property type="entry name" value="RecA_monomer-monomer_interface"/>
</dbReference>
<dbReference type="NCBIfam" id="TIGR02012">
    <property type="entry name" value="tigrfam_recA"/>
    <property type="match status" value="1"/>
</dbReference>
<dbReference type="PANTHER" id="PTHR45900:SF1">
    <property type="entry name" value="MITOCHONDRIAL DNA REPAIR PROTEIN RECA HOMOLOG-RELATED"/>
    <property type="match status" value="1"/>
</dbReference>
<dbReference type="PANTHER" id="PTHR45900">
    <property type="entry name" value="RECA"/>
    <property type="match status" value="1"/>
</dbReference>
<dbReference type="Pfam" id="PF00154">
    <property type="entry name" value="RecA"/>
    <property type="match status" value="1"/>
</dbReference>
<dbReference type="Pfam" id="PF21096">
    <property type="entry name" value="RecA_C"/>
    <property type="match status" value="1"/>
</dbReference>
<dbReference type="PRINTS" id="PR00142">
    <property type="entry name" value="RECA"/>
</dbReference>
<dbReference type="SMART" id="SM00382">
    <property type="entry name" value="AAA"/>
    <property type="match status" value="1"/>
</dbReference>
<dbReference type="SUPFAM" id="SSF52540">
    <property type="entry name" value="P-loop containing nucleoside triphosphate hydrolases"/>
    <property type="match status" value="1"/>
</dbReference>
<dbReference type="SUPFAM" id="SSF54752">
    <property type="entry name" value="RecA protein, C-terminal domain"/>
    <property type="match status" value="1"/>
</dbReference>
<dbReference type="PROSITE" id="PS00321">
    <property type="entry name" value="RECA_1"/>
    <property type="match status" value="1"/>
</dbReference>
<dbReference type="PROSITE" id="PS50162">
    <property type="entry name" value="RECA_2"/>
    <property type="match status" value="1"/>
</dbReference>
<dbReference type="PROSITE" id="PS50163">
    <property type="entry name" value="RECA_3"/>
    <property type="match status" value="1"/>
</dbReference>
<name>RECA_ACICJ</name>
<comment type="function">
    <text evidence="1">Can catalyze the hydrolysis of ATP in the presence of single-stranded DNA, the ATP-dependent uptake of single-stranded DNA by duplex DNA, and the ATP-dependent hybridization of homologous single-stranded DNAs. It interacts with LexA causing its activation and leading to its autocatalytic cleavage.</text>
</comment>
<comment type="subcellular location">
    <subcellularLocation>
        <location evidence="1">Cytoplasm</location>
    </subcellularLocation>
</comment>
<comment type="similarity">
    <text evidence="1">Belongs to the RecA family.</text>
</comment>
<proteinExistence type="inferred from homology"/>